<proteinExistence type="inferred from homology"/>
<protein>
    <recommendedName>
        <fullName>Mediator of RNA polymerase II transcription subunit 3</fullName>
    </recommendedName>
    <alternativeName>
        <fullName>Mediator complex subunit 3</fullName>
    </alternativeName>
</protein>
<gene>
    <name type="primary">PGD1</name>
    <name type="synonym">MED3</name>
    <name type="ordered locus">AFR486C</name>
</gene>
<accession>Q752T7</accession>
<sequence length="332" mass="35772">MGSNIDGILRENLTLEELQEWLTSSEGNKLAIDDHIKATQGRVLPLRLLFNEFLRTISHIEQLSDKTPQEKFQLIRSKLQELYGKLHALVRDFQRLQPLFDTMVPFSETSERKFYPKETLGTAVEPVRPLASPSYRRPSNRSSADTPSSNAPTPSAAVVSGAALVAPQVKHQRRPRTNTAKRQPSVSASVVPSANSSGPATIPGATPLMLSGMSPLNMVASPLNGISPSRKPAQPHHQTTPSAALGMQPMQQKQMSIQAKATPSKSGTISSANLTPQSILNMSAFENSAGGVPNSAVPLNQNNNAIMGFPTDIDNIDLNALELGSLNMDLLG</sequence>
<reference key="1">
    <citation type="journal article" date="2004" name="Science">
        <title>The Ashbya gossypii genome as a tool for mapping the ancient Saccharomyces cerevisiae genome.</title>
        <authorList>
            <person name="Dietrich F.S."/>
            <person name="Voegeli S."/>
            <person name="Brachat S."/>
            <person name="Lerch A."/>
            <person name="Gates K."/>
            <person name="Steiner S."/>
            <person name="Mohr C."/>
            <person name="Poehlmann R."/>
            <person name="Luedi P."/>
            <person name="Choi S."/>
            <person name="Wing R.A."/>
            <person name="Flavier A."/>
            <person name="Gaffney T.D."/>
            <person name="Philippsen P."/>
        </authorList>
    </citation>
    <scope>NUCLEOTIDE SEQUENCE [LARGE SCALE GENOMIC DNA]</scope>
    <source>
        <strain>ATCC 10895 / CBS 109.51 / FGSC 9923 / NRRL Y-1056</strain>
    </source>
</reference>
<reference key="2">
    <citation type="journal article" date="2013" name="G3 (Bethesda)">
        <title>Genomes of Ashbya fungi isolated from insects reveal four mating-type loci, numerous translocations, lack of transposons, and distinct gene duplications.</title>
        <authorList>
            <person name="Dietrich F.S."/>
            <person name="Voegeli S."/>
            <person name="Kuo S."/>
            <person name="Philippsen P."/>
        </authorList>
    </citation>
    <scope>GENOME REANNOTATION</scope>
    <scope>SEQUENCE REVISION TO 25 AND 270</scope>
    <source>
        <strain>ATCC 10895 / CBS 109.51 / FGSC 9923 / NRRL Y-1056</strain>
    </source>
</reference>
<keyword id="KW-0010">Activator</keyword>
<keyword id="KW-0539">Nucleus</keyword>
<keyword id="KW-1185">Reference proteome</keyword>
<keyword id="KW-0804">Transcription</keyword>
<keyword id="KW-0805">Transcription regulation</keyword>
<feature type="chain" id="PRO_0000302016" description="Mediator of RNA polymerase II transcription subunit 3">
    <location>
        <begin position="1"/>
        <end position="332"/>
    </location>
</feature>
<feature type="region of interest" description="Disordered" evidence="2">
    <location>
        <begin position="125"/>
        <end position="206"/>
    </location>
</feature>
<feature type="region of interest" description="Disordered" evidence="2">
    <location>
        <begin position="221"/>
        <end position="242"/>
    </location>
</feature>
<feature type="compositionally biased region" description="Low complexity" evidence="2">
    <location>
        <begin position="132"/>
        <end position="143"/>
    </location>
</feature>
<feature type="compositionally biased region" description="Polar residues" evidence="2">
    <location>
        <begin position="144"/>
        <end position="153"/>
    </location>
</feature>
<feature type="compositionally biased region" description="Low complexity" evidence="2">
    <location>
        <begin position="155"/>
        <end position="166"/>
    </location>
</feature>
<feature type="compositionally biased region" description="Low complexity" evidence="2">
    <location>
        <begin position="184"/>
        <end position="200"/>
    </location>
</feature>
<name>MED3_EREGS</name>
<comment type="function">
    <text evidence="1">Component of the Mediator complex, a coactivator involved in regulated gene transcription of nearly all RNA polymerase II-dependent genes. Mediator functions as a bridge to convey information from gene-specific regulatory proteins to the basal RNA polymerase II transcription machinery. Mediator is recruited to promoters by direct interactions with regulatory proteins and serves as a scaffold for the assembly of a functional preinitiation complex with RNA polymerase II and the general transcription factors (By similarity).</text>
</comment>
<comment type="subunit">
    <text evidence="1">Component of the Mediator complex.</text>
</comment>
<comment type="subcellular location">
    <subcellularLocation>
        <location evidence="1">Nucleus</location>
    </subcellularLocation>
</comment>
<comment type="similarity">
    <text evidence="3">Belongs to the Mediator complex subunit 3 family.</text>
</comment>
<organism>
    <name type="scientific">Eremothecium gossypii (strain ATCC 10895 / CBS 109.51 / FGSC 9923 / NRRL Y-1056)</name>
    <name type="common">Yeast</name>
    <name type="synonym">Ashbya gossypii</name>
    <dbReference type="NCBI Taxonomy" id="284811"/>
    <lineage>
        <taxon>Eukaryota</taxon>
        <taxon>Fungi</taxon>
        <taxon>Dikarya</taxon>
        <taxon>Ascomycota</taxon>
        <taxon>Saccharomycotina</taxon>
        <taxon>Saccharomycetes</taxon>
        <taxon>Saccharomycetales</taxon>
        <taxon>Saccharomycetaceae</taxon>
        <taxon>Eremothecium</taxon>
    </lineage>
</organism>
<evidence type="ECO:0000250" key="1"/>
<evidence type="ECO:0000256" key="2">
    <source>
        <dbReference type="SAM" id="MobiDB-lite"/>
    </source>
</evidence>
<evidence type="ECO:0000305" key="3"/>
<dbReference type="EMBL" id="AE016819">
    <property type="protein sequence ID" value="AAS53857.2"/>
    <property type="molecule type" value="Genomic_DNA"/>
</dbReference>
<dbReference type="RefSeq" id="NP_986033.2">
    <property type="nucleotide sequence ID" value="NM_212169.2"/>
</dbReference>
<dbReference type="SMR" id="Q752T7"/>
<dbReference type="FunCoup" id="Q752T7">
    <property type="interactions" value="140"/>
</dbReference>
<dbReference type="STRING" id="284811.Q752T7"/>
<dbReference type="EnsemblFungi" id="AAS53857">
    <property type="protein sequence ID" value="AAS53857"/>
    <property type="gene ID" value="AGOS_AFR486C"/>
</dbReference>
<dbReference type="GeneID" id="4622312"/>
<dbReference type="KEGG" id="ago:AGOS_AFR486C"/>
<dbReference type="eggNOG" id="ENOG502S3GT">
    <property type="taxonomic scope" value="Eukaryota"/>
</dbReference>
<dbReference type="HOGENOM" id="CLU_049224_0_0_1"/>
<dbReference type="InParanoid" id="Q752T7"/>
<dbReference type="OMA" id="FIQIMAN"/>
<dbReference type="OrthoDB" id="4070475at2759"/>
<dbReference type="Proteomes" id="UP000000591">
    <property type="component" value="Chromosome VI"/>
</dbReference>
<dbReference type="GO" id="GO:0016592">
    <property type="term" value="C:mediator complex"/>
    <property type="evidence" value="ECO:0007669"/>
    <property type="project" value="InterPro"/>
</dbReference>
<dbReference type="GO" id="GO:0003712">
    <property type="term" value="F:transcription coregulator activity"/>
    <property type="evidence" value="ECO:0007669"/>
    <property type="project" value="InterPro"/>
</dbReference>
<dbReference type="GO" id="GO:0006357">
    <property type="term" value="P:regulation of transcription by RNA polymerase II"/>
    <property type="evidence" value="ECO:0007669"/>
    <property type="project" value="InterPro"/>
</dbReference>
<dbReference type="InterPro" id="IPR020998">
    <property type="entry name" value="Med3"/>
</dbReference>
<dbReference type="Pfam" id="PF11593">
    <property type="entry name" value="Med3"/>
    <property type="match status" value="1"/>
</dbReference>